<organism>
    <name type="scientific">Rattus norvegicus</name>
    <name type="common">Rat</name>
    <dbReference type="NCBI Taxonomy" id="10116"/>
    <lineage>
        <taxon>Eukaryota</taxon>
        <taxon>Metazoa</taxon>
        <taxon>Chordata</taxon>
        <taxon>Craniata</taxon>
        <taxon>Vertebrata</taxon>
        <taxon>Euteleostomi</taxon>
        <taxon>Mammalia</taxon>
        <taxon>Eutheria</taxon>
        <taxon>Euarchontoglires</taxon>
        <taxon>Glires</taxon>
        <taxon>Rodentia</taxon>
        <taxon>Myomorpha</taxon>
        <taxon>Muroidea</taxon>
        <taxon>Muridae</taxon>
        <taxon>Murinae</taxon>
        <taxon>Rattus</taxon>
    </lineage>
</organism>
<keyword id="KW-0067">ATP-binding</keyword>
<keyword id="KW-0156">Chromatin regulator</keyword>
<keyword id="KW-0238">DNA-binding</keyword>
<keyword id="KW-0378">Hydrolase</keyword>
<keyword id="KW-0547">Nucleotide-binding</keyword>
<keyword id="KW-0539">Nucleus</keyword>
<keyword id="KW-0597">Phosphoprotein</keyword>
<keyword id="KW-1185">Reference proteome</keyword>
<keyword id="KW-0677">Repeat</keyword>
<keyword id="KW-0804">Transcription</keyword>
<keyword id="KW-0805">Transcription regulation</keyword>
<sequence>MKMKIQKKEKQLSKLRALNHSPMSDASVNFDYKSPSPFDCSPDQGENIEEAANHCLPQKDFYTTEEEADTLFSRKLMSHNGMEDNGGRGTGVKKKRKKKEPGEQEGTKASKDREPKPKRKREPKEPKEPRRAKEPKRAKEPKEAKQKDGVKKPRKPREASGTKEGKEKRSCTDCGPRTKPKKASKDQGPTPVERKKKGKRKNETTVESLELDQSLPNPSLQSPEEPSESADSQKRRSGRQVKRRKYNEDLDFKVVDDDGETIAVLGAGRTSALSASTLAWQAEEPPEDDANIIEKILASKTVQEVHPGEPPFDLELFYVKYRNFSYLHCKWATMEELEKDPRIAQKIKRFRNKQAQMKHIFTEPDEDLFNPDYIEIDRILEVAHTKDAETGEEVTHYLVKWCSLPYEESTWELEEDVDPAKVKEFESLQILPEVKPVERPASDAWQKLETSREYKNSNRLREYQLEGMNWLLFNWYNRKNCILADEMGLGKTIQSIAFLSEIFVRGIHGPFLIIAPLSTITNWEREFRTWTEMNAIVYHGSQISRQMIQQYEMVYRDAQGNPLSGVFKFHVVITTFEMILADCPELKKIHWSCVVIDEAHRLKNRNCKLLEGLKLMALEHKVLLTGTPLQNSVEELFSLLNFLEPSQFPSETAFLEEFGDLKTEEQVKKLQSILKPMMLRRLKDDVEKNLAPKQETIIEVELTNIQKKYYRAILEKNFSFLTKGANQHNMPNLINTMMELRKCCNHPYLINGAEEKILEDFRKAHSSEASDFQLQAMIQAAGKLVLIDKLLPKLIAGGHKVLIFSQMVRCLDILEDYLIQRRYTYERIDGRVRGNLRQAAIDRFCKPDSDRFVFLLCTRAGGLGINLTAADTCIIFDSDWNPQNDLQAQARCHRIGQSKAVKVYRLITRNSYEREMFDKASLKLGLDKAILQDINRKGSTNGVQQLSKMEVEDLLRKGAYGALMDEEDEGSKFCEEDIDQILQRRTHTITIQSEGKGSTFAKASFVASGNRTDISLDDPNFWQKWAKIAELDTEANNEKESLVIDRPRVRKQTKHYNSFEEDELMEFSELDSDSDERPTRSRRLSDKARRYLRAECFRVEKNLLTFGWGRWKDILTHGRFKWPLNEKDMEVICRALLVYCVKHYKGDEKIKSFIWELITPSKDGQVQTLQNHSGLSAPVPRGRKGKKTKNQLLLPELKTADWLATCNPEVVLHDDGYKKHLKQHCNKVLLRVRMLYYLKAEILGEAADKAFEGTPARELDVLLPDIDYVEIPVDWWDAEADKSLLIGVFKHGYERYNAMRADPALCFLEKVGMPDEKSLSAEQGVTDGTSDIPERGNIDKEDSAEDKVDGLQKQTASPSDGSDGIFGEKKDDSQAVSSALTARLRRLVTIYQRCNRKELCRPEILGPGNQGYWVQEEVFRRTSDMDLINKEAQKRWTRREQADFYRTVSSFGVVYDQEKEAFDWTQFRAISRLDKKSDENLEHYFHSFVAMCRNVCRLPTWKDDGPPDASIYVEPITEERAAKTLYRIELLRKVREQVLTCPQLHERLQLCRPSLYLPVWWECGKHDRDLLIGTAKHGLNRTDYYIMNDPQLSFLDAYRNYAQHKRTDTQAPGSLCCLYQGNSKLYESLTYTPMSRTSESLESEPENLVKMDSRDDHLCLPEAGLPDITCENFVSKVQEVISLDHDESLLPESLENMMYGKTGLSQEPRSFQEAPSTNMQSRKKTVTVSASRDESCQLPGIEAEITSASSLMSSLEAGVAKMNIKNGKHLLVSISEEGEPCCSETGRSPESRGRLEARCLASPTLDTGHESGFVDLCSLSVYDSKRNFSSDQQLIDLLENKSLENKLILNQSDEEEEENEKETLAIVASTTEKPAVLDFTQPTASIPRGKNLSFHQDEAKKGRLEVGSKTPGPQRAFPPSANQCHCKHIERWAHGLGSEESEGEKPKAYEPDPYRSKANNTTVEGEPAIIPTEPFKLKHELLKEPWKESSEGGKSFSMYVPEGSEPKSEEMDFENKDDYEKDGACHSQDYPGKYSEEESKSSASGIAGDLGEEAQEVRAPTIAQLLQEKTLYSFSEWPKDRVIINRLDNICHVVLKGKWPCSHQYEPSGALPTPVLSSSAGSRSSLSEPEATEHSFSNGAALAAQIQKESFLAPVFTKDEQKHRRPYEFEVERDAKARSLEEYSASHGRPPIVLNGWHGESAIDLSCSSEGSPGATSPFPVSASTPKIGAISSLQGALGMDLSGILQAGLIHPVTGQIVNGSLRRDDAAMRRRRGRRKHIEGGMDLIFLKEQTLQAGILEVHEDAGQTTLNTTHPEGPGAASSASEPTAAASSQAEKAVPSKSLLDWLRQQADYSLDVPGFGASFSDKPKQRRPRCKEPGKLDIGSLGGEERVSAVPKEPGLRGFLPESKFNHTLAEPVLRDAGPRRRGRRPRNELLKAPAIVADSPSGMGPLFMNGLIAGMDLVGLQNVRNIPGIPLTGLVGFPAGFATMPTGEDVKNTLSMLPMMLPGMATVPQMFGVGGLLNTPMATTCTTTASASLASTKSGASATEKTTEDELSGRDVKADSLVEDKPGPSPFSDQSEPTITTSSPVAFNPFLIPGVSPGLIYPSMFLSPGMGMALPAMQQGRHSEMAGLETQKRKKKKTKGDNPTPEPASVCEREPGSDQNCTESSVTVSPEREHVAQAREEGLKDSNDDTN</sequence>
<accession>D3ZA12</accession>
<reference key="1">
    <citation type="journal article" date="2004" name="Nature">
        <title>Genome sequence of the Brown Norway rat yields insights into mammalian evolution.</title>
        <authorList>
            <person name="Gibbs R.A."/>
            <person name="Weinstock G.M."/>
            <person name="Metzker M.L."/>
            <person name="Muzny D.M."/>
            <person name="Sodergren E.J."/>
            <person name="Scherer S."/>
            <person name="Scott G."/>
            <person name="Steffen D."/>
            <person name="Worley K.C."/>
            <person name="Burch P.E."/>
            <person name="Okwuonu G."/>
            <person name="Hines S."/>
            <person name="Lewis L."/>
            <person name="Deramo C."/>
            <person name="Delgado O."/>
            <person name="Dugan-Rocha S."/>
            <person name="Miner G."/>
            <person name="Morgan M."/>
            <person name="Hawes A."/>
            <person name="Gill R."/>
            <person name="Holt R.A."/>
            <person name="Adams M.D."/>
            <person name="Amanatides P.G."/>
            <person name="Baden-Tillson H."/>
            <person name="Barnstead M."/>
            <person name="Chin S."/>
            <person name="Evans C.A."/>
            <person name="Ferriera S."/>
            <person name="Fosler C."/>
            <person name="Glodek A."/>
            <person name="Gu Z."/>
            <person name="Jennings D."/>
            <person name="Kraft C.L."/>
            <person name="Nguyen T."/>
            <person name="Pfannkoch C.M."/>
            <person name="Sitter C."/>
            <person name="Sutton G.G."/>
            <person name="Venter J.C."/>
            <person name="Woodage T."/>
            <person name="Smith D."/>
            <person name="Lee H.-M."/>
            <person name="Gustafson E."/>
            <person name="Cahill P."/>
            <person name="Kana A."/>
            <person name="Doucette-Stamm L."/>
            <person name="Weinstock K."/>
            <person name="Fechtel K."/>
            <person name="Weiss R.B."/>
            <person name="Dunn D.M."/>
            <person name="Green E.D."/>
            <person name="Blakesley R.W."/>
            <person name="Bouffard G.G."/>
            <person name="De Jong P.J."/>
            <person name="Osoegawa K."/>
            <person name="Zhu B."/>
            <person name="Marra M."/>
            <person name="Schein J."/>
            <person name="Bosdet I."/>
            <person name="Fjell C."/>
            <person name="Jones S."/>
            <person name="Krzywinski M."/>
            <person name="Mathewson C."/>
            <person name="Siddiqui A."/>
            <person name="Wye N."/>
            <person name="McPherson J."/>
            <person name="Zhao S."/>
            <person name="Fraser C.M."/>
            <person name="Shetty J."/>
            <person name="Shatsman S."/>
            <person name="Geer K."/>
            <person name="Chen Y."/>
            <person name="Abramzon S."/>
            <person name="Nierman W.C."/>
            <person name="Havlak P.H."/>
            <person name="Chen R."/>
            <person name="Durbin K.J."/>
            <person name="Egan A."/>
            <person name="Ren Y."/>
            <person name="Song X.-Z."/>
            <person name="Li B."/>
            <person name="Liu Y."/>
            <person name="Qin X."/>
            <person name="Cawley S."/>
            <person name="Cooney A.J."/>
            <person name="D'Souza L.M."/>
            <person name="Martin K."/>
            <person name="Wu J.Q."/>
            <person name="Gonzalez-Garay M.L."/>
            <person name="Jackson A.R."/>
            <person name="Kalafus K.J."/>
            <person name="McLeod M.P."/>
            <person name="Milosavljevic A."/>
            <person name="Virk D."/>
            <person name="Volkov A."/>
            <person name="Wheeler D.A."/>
            <person name="Zhang Z."/>
            <person name="Bailey J.A."/>
            <person name="Eichler E.E."/>
            <person name="Tuzun E."/>
            <person name="Birney E."/>
            <person name="Mongin E."/>
            <person name="Ureta-Vidal A."/>
            <person name="Woodwark C."/>
            <person name="Zdobnov E."/>
            <person name="Bork P."/>
            <person name="Suyama M."/>
            <person name="Torrents D."/>
            <person name="Alexandersson M."/>
            <person name="Trask B.J."/>
            <person name="Young J.M."/>
            <person name="Huang H."/>
            <person name="Wang H."/>
            <person name="Xing H."/>
            <person name="Daniels S."/>
            <person name="Gietzen D."/>
            <person name="Schmidt J."/>
            <person name="Stevens K."/>
            <person name="Vitt U."/>
            <person name="Wingrove J."/>
            <person name="Camara F."/>
            <person name="Mar Alba M."/>
            <person name="Abril J.F."/>
            <person name="Guigo R."/>
            <person name="Smit A."/>
            <person name="Dubchak I."/>
            <person name="Rubin E.M."/>
            <person name="Couronne O."/>
            <person name="Poliakov A."/>
            <person name="Huebner N."/>
            <person name="Ganten D."/>
            <person name="Goesele C."/>
            <person name="Hummel O."/>
            <person name="Kreitler T."/>
            <person name="Lee Y.-A."/>
            <person name="Monti J."/>
            <person name="Schulz H."/>
            <person name="Zimdahl H."/>
            <person name="Himmelbauer H."/>
            <person name="Lehrach H."/>
            <person name="Jacob H.J."/>
            <person name="Bromberg S."/>
            <person name="Gullings-Handley J."/>
            <person name="Jensen-Seaman M.I."/>
            <person name="Kwitek A.E."/>
            <person name="Lazar J."/>
            <person name="Pasko D."/>
            <person name="Tonellato P.J."/>
            <person name="Twigger S."/>
            <person name="Ponting C.P."/>
            <person name="Duarte J.M."/>
            <person name="Rice S."/>
            <person name="Goodstadt L."/>
            <person name="Beatson S.A."/>
            <person name="Emes R.D."/>
            <person name="Winter E.E."/>
            <person name="Webber C."/>
            <person name="Brandt P."/>
            <person name="Nyakatura G."/>
            <person name="Adetobi M."/>
            <person name="Chiaromonte F."/>
            <person name="Elnitski L."/>
            <person name="Eswara P."/>
            <person name="Hardison R.C."/>
            <person name="Hou M."/>
            <person name="Kolbe D."/>
            <person name="Makova K."/>
            <person name="Miller W."/>
            <person name="Nekrutenko A."/>
            <person name="Riemer C."/>
            <person name="Schwartz S."/>
            <person name="Taylor J."/>
            <person name="Yang S."/>
            <person name="Zhang Y."/>
            <person name="Lindpaintner K."/>
            <person name="Andrews T.D."/>
            <person name="Caccamo M."/>
            <person name="Clamp M."/>
            <person name="Clarke L."/>
            <person name="Curwen V."/>
            <person name="Durbin R.M."/>
            <person name="Eyras E."/>
            <person name="Searle S.M."/>
            <person name="Cooper G.M."/>
            <person name="Batzoglou S."/>
            <person name="Brudno M."/>
            <person name="Sidow A."/>
            <person name="Stone E.A."/>
            <person name="Payseur B.A."/>
            <person name="Bourque G."/>
            <person name="Lopez-Otin C."/>
            <person name="Puente X.S."/>
            <person name="Chakrabarti K."/>
            <person name="Chatterji S."/>
            <person name="Dewey C."/>
            <person name="Pachter L."/>
            <person name="Bray N."/>
            <person name="Yap V.B."/>
            <person name="Caspi A."/>
            <person name="Tesler G."/>
            <person name="Pevzner P.A."/>
            <person name="Haussler D."/>
            <person name="Roskin K.M."/>
            <person name="Baertsch R."/>
            <person name="Clawson H."/>
            <person name="Furey T.S."/>
            <person name="Hinrichs A.S."/>
            <person name="Karolchik D."/>
            <person name="Kent W.J."/>
            <person name="Rosenbloom K.R."/>
            <person name="Trumbower H."/>
            <person name="Weirauch M."/>
            <person name="Cooper D.N."/>
            <person name="Stenson P.D."/>
            <person name="Ma B."/>
            <person name="Brent M."/>
            <person name="Arumugam M."/>
            <person name="Shteynberg D."/>
            <person name="Copley R.R."/>
            <person name="Taylor M.S."/>
            <person name="Riethman H."/>
            <person name="Mudunuri U."/>
            <person name="Peterson J."/>
            <person name="Guyer M."/>
            <person name="Felsenfeld A."/>
            <person name="Old S."/>
            <person name="Mockrin S."/>
            <person name="Collins F.S."/>
        </authorList>
    </citation>
    <scope>NUCLEOTIDE SEQUENCE [LARGE SCALE GENOMIC DNA]</scope>
    <source>
        <strain>Brown Norway</strain>
    </source>
</reference>
<reference key="2">
    <citation type="submission" date="2005-09" db="EMBL/GenBank/DDBJ databases">
        <authorList>
            <person name="Mural R.J."/>
            <person name="Adams M.D."/>
            <person name="Myers E.W."/>
            <person name="Smith H.O."/>
            <person name="Venter J.C."/>
        </authorList>
    </citation>
    <scope>NUCLEOTIDE SEQUENCE [LARGE SCALE GENOMIC DNA]</scope>
</reference>
<reference key="3">
    <citation type="journal article" date="2002" name="Proc. Natl. Acad. Sci. U.S.A.">
        <title>Identification of a transcriptionally active peroxisome proliferator-activated receptor alpha-interacting cofactor complex in rat liver and characterization of PRIC285 as a coactivator.</title>
        <authorList>
            <person name="Surapureddi S."/>
            <person name="Yu S."/>
            <person name="Bu H."/>
            <person name="Hashimoto T."/>
            <person name="Yeldandi A.V."/>
            <person name="Kashireddy P."/>
            <person name="Cherkaoui-Malki M."/>
            <person name="Qi C."/>
            <person name="Zhu Y.-J."/>
            <person name="Rao M.S."/>
            <person name="Reddy J.K."/>
        </authorList>
    </citation>
    <scope>INTERACTION WITH PPARA</scope>
</reference>
<reference key="4">
    <citation type="journal article" date="2012" name="Nat. Commun.">
        <title>Quantitative maps of protein phosphorylation sites across 14 different rat organs and tissues.</title>
        <authorList>
            <person name="Lundby A."/>
            <person name="Secher A."/>
            <person name="Lage K."/>
            <person name="Nordsborg N.B."/>
            <person name="Dmytriyev A."/>
            <person name="Lundby C."/>
            <person name="Olsen J.V."/>
        </authorList>
    </citation>
    <scope>PHOSPHORYLATION [LARGE SCALE ANALYSIS] AT SER-1852</scope>
    <scope>IDENTIFICATION BY MASS SPECTROMETRY [LARGE SCALE ANALYSIS]</scope>
</reference>
<feature type="chain" id="PRO_0000429354" description="Chromodomain-helicase-DNA-binding protein 6">
    <location>
        <begin position="1"/>
        <end position="2698"/>
    </location>
</feature>
<feature type="domain" description="Chromo 1" evidence="4">
    <location>
        <begin position="291"/>
        <end position="342"/>
    </location>
</feature>
<feature type="domain" description="Chromo 2" evidence="4">
    <location>
        <begin position="374"/>
        <end position="438"/>
    </location>
</feature>
<feature type="domain" description="Helicase ATP-binding" evidence="5">
    <location>
        <begin position="472"/>
        <end position="646"/>
    </location>
</feature>
<feature type="domain" description="Helicase C-terminal" evidence="6">
    <location>
        <begin position="786"/>
        <end position="955"/>
    </location>
</feature>
<feature type="domain" description="Myb-like">
    <location>
        <begin position="1435"/>
        <end position="1489"/>
    </location>
</feature>
<feature type="region of interest" description="Required for DNA-dependent ATPase activity" evidence="1">
    <location>
        <begin position="1"/>
        <end position="746"/>
    </location>
</feature>
<feature type="region of interest" description="Disordered" evidence="7">
    <location>
        <begin position="1"/>
        <end position="243"/>
    </location>
</feature>
<feature type="region of interest" description="Disordered" evidence="7">
    <location>
        <begin position="1318"/>
        <end position="1370"/>
    </location>
</feature>
<feature type="region of interest" description="Disordered" evidence="7">
    <location>
        <begin position="1707"/>
        <end position="1731"/>
    </location>
</feature>
<feature type="region of interest" description="Disordered" evidence="7">
    <location>
        <begin position="1935"/>
        <end position="2046"/>
    </location>
</feature>
<feature type="region of interest" description="Disordered" evidence="7">
    <location>
        <begin position="2111"/>
        <end position="2137"/>
    </location>
</feature>
<feature type="region of interest" description="Disordered" evidence="7">
    <location>
        <begin position="2308"/>
        <end position="2337"/>
    </location>
</feature>
<feature type="region of interest" description="Disordered" evidence="7">
    <location>
        <begin position="2359"/>
        <end position="2387"/>
    </location>
</feature>
<feature type="region of interest" description="Disordered" evidence="7">
    <location>
        <begin position="2538"/>
        <end position="2587"/>
    </location>
</feature>
<feature type="region of interest" description="Disordered" evidence="7">
    <location>
        <begin position="2626"/>
        <end position="2698"/>
    </location>
</feature>
<feature type="short sequence motif" description="DEAH box">
    <location>
        <begin position="597"/>
        <end position="600"/>
    </location>
</feature>
<feature type="compositionally biased region" description="Basic and acidic residues" evidence="7">
    <location>
        <begin position="1"/>
        <end position="12"/>
    </location>
</feature>
<feature type="compositionally biased region" description="Basic and acidic residues" evidence="7">
    <location>
        <begin position="100"/>
        <end position="115"/>
    </location>
</feature>
<feature type="compositionally biased region" description="Basic and acidic residues" evidence="7">
    <location>
        <begin position="122"/>
        <end position="171"/>
    </location>
</feature>
<feature type="compositionally biased region" description="Low complexity" evidence="7">
    <location>
        <begin position="213"/>
        <end position="224"/>
    </location>
</feature>
<feature type="compositionally biased region" description="Polar residues" evidence="7">
    <location>
        <begin position="1320"/>
        <end position="1329"/>
    </location>
</feature>
<feature type="compositionally biased region" description="Basic and acidic residues" evidence="7">
    <location>
        <begin position="1332"/>
        <end position="1350"/>
    </location>
</feature>
<feature type="compositionally biased region" description="Polar residues" evidence="7">
    <location>
        <begin position="1707"/>
        <end position="1730"/>
    </location>
</feature>
<feature type="compositionally biased region" description="Basic and acidic residues" evidence="7">
    <location>
        <begin position="1943"/>
        <end position="1955"/>
    </location>
</feature>
<feature type="compositionally biased region" description="Basic and acidic residues" evidence="7">
    <location>
        <begin position="1975"/>
        <end position="1991"/>
    </location>
</feature>
<feature type="compositionally biased region" description="Basic and acidic residues" evidence="7">
    <location>
        <begin position="2004"/>
        <end position="2024"/>
    </location>
</feature>
<feature type="compositionally biased region" description="Low complexity" evidence="7">
    <location>
        <begin position="2117"/>
        <end position="2127"/>
    </location>
</feature>
<feature type="compositionally biased region" description="Low complexity" evidence="7">
    <location>
        <begin position="2315"/>
        <end position="2336"/>
    </location>
</feature>
<feature type="compositionally biased region" description="Low complexity" evidence="7">
    <location>
        <begin position="2538"/>
        <end position="2550"/>
    </location>
</feature>
<feature type="compositionally biased region" description="Basic and acidic residues" evidence="7">
    <location>
        <begin position="2552"/>
        <end position="2573"/>
    </location>
</feature>
<feature type="compositionally biased region" description="Polar residues" evidence="7">
    <location>
        <begin position="2578"/>
        <end position="2587"/>
    </location>
</feature>
<feature type="compositionally biased region" description="Polar residues" evidence="7">
    <location>
        <begin position="2664"/>
        <end position="2675"/>
    </location>
</feature>
<feature type="compositionally biased region" description="Basic and acidic residues" evidence="7">
    <location>
        <begin position="2677"/>
        <end position="2698"/>
    </location>
</feature>
<feature type="binding site" evidence="5">
    <location>
        <begin position="485"/>
        <end position="492"/>
    </location>
    <ligand>
        <name>ATP</name>
        <dbReference type="ChEBI" id="CHEBI:30616"/>
    </ligand>
</feature>
<feature type="modified residue" description="Phosphoserine" evidence="10">
    <location>
        <position position="1852"/>
    </location>
</feature>
<comment type="function">
    <text evidence="3">ATP-dependent chromatin-remodeling factor. Regulates transcription by disrupting nucleosomes in a largely non-sliding manner which strongly increases the accessibility of chromatin. Activates transcription of specific genes in response to oxidative stress through interaction with NFE2L2.</text>
</comment>
<comment type="catalytic activity">
    <reaction evidence="3">
        <text>ATP + H2O = ADP + phosphate + H(+)</text>
        <dbReference type="Rhea" id="RHEA:13065"/>
        <dbReference type="ChEBI" id="CHEBI:15377"/>
        <dbReference type="ChEBI" id="CHEBI:15378"/>
        <dbReference type="ChEBI" id="CHEBI:30616"/>
        <dbReference type="ChEBI" id="CHEBI:43474"/>
        <dbReference type="ChEBI" id="CHEBI:456216"/>
    </reaction>
</comment>
<comment type="subunit">
    <text evidence="3 8">Interacts with NFE2L2; involved in activation of the transcription (By similarity). May interact with PPARA (PubMed:12189208).</text>
</comment>
<comment type="subcellular location">
    <subcellularLocation>
        <location evidence="3">Nucleus</location>
        <location evidence="3">Nucleoplasm</location>
    </subcellularLocation>
    <text evidence="3">Enriched at sites of mRNA synthesis.</text>
</comment>
<comment type="tissue specificity">
    <text evidence="2">Widely expressed.</text>
</comment>
<comment type="similarity">
    <text evidence="9">Belongs to the SNF2/RAD54 helicase family.</text>
</comment>
<dbReference type="EC" id="3.6.4.-" evidence="3"/>
<dbReference type="EMBL" id="AABR06027401">
    <property type="status" value="NOT_ANNOTATED_CDS"/>
    <property type="molecule type" value="Genomic_DNA"/>
</dbReference>
<dbReference type="EMBL" id="AABR06027402">
    <property type="status" value="NOT_ANNOTATED_CDS"/>
    <property type="molecule type" value="Genomic_DNA"/>
</dbReference>
<dbReference type="EMBL" id="AABR06027403">
    <property type="status" value="NOT_ANNOTATED_CDS"/>
    <property type="molecule type" value="Genomic_DNA"/>
</dbReference>
<dbReference type="EMBL" id="AABR06027404">
    <property type="status" value="NOT_ANNOTATED_CDS"/>
    <property type="molecule type" value="Genomic_DNA"/>
</dbReference>
<dbReference type="EMBL" id="AABR06027405">
    <property type="status" value="NOT_ANNOTATED_CDS"/>
    <property type="molecule type" value="Genomic_DNA"/>
</dbReference>
<dbReference type="EMBL" id="AABR06027406">
    <property type="status" value="NOT_ANNOTATED_CDS"/>
    <property type="molecule type" value="Genomic_DNA"/>
</dbReference>
<dbReference type="EMBL" id="AABR06027407">
    <property type="status" value="NOT_ANNOTATED_CDS"/>
    <property type="molecule type" value="Genomic_DNA"/>
</dbReference>
<dbReference type="EMBL" id="AABR06027408">
    <property type="status" value="NOT_ANNOTATED_CDS"/>
    <property type="molecule type" value="Genomic_DNA"/>
</dbReference>
<dbReference type="EMBL" id="AABR06027409">
    <property type="status" value="NOT_ANNOTATED_CDS"/>
    <property type="molecule type" value="Genomic_DNA"/>
</dbReference>
<dbReference type="EMBL" id="CH474005">
    <property type="protein sequence ID" value="EDL96607.1"/>
    <property type="molecule type" value="Genomic_DNA"/>
</dbReference>
<dbReference type="RefSeq" id="NP_001101267.1">
    <property type="nucleotide sequence ID" value="NM_001107797.2"/>
</dbReference>
<dbReference type="SMR" id="D3ZA12"/>
<dbReference type="BioGRID" id="259994">
    <property type="interactions" value="1"/>
</dbReference>
<dbReference type="FunCoup" id="D3ZA12">
    <property type="interactions" value="4814"/>
</dbReference>
<dbReference type="STRING" id="10116.ENSRNOP00000071893"/>
<dbReference type="GlyGen" id="D3ZA12">
    <property type="glycosylation" value="3 sites"/>
</dbReference>
<dbReference type="iPTMnet" id="D3ZA12"/>
<dbReference type="PhosphoSitePlus" id="D3ZA12"/>
<dbReference type="jPOST" id="D3ZA12"/>
<dbReference type="PaxDb" id="10116-ENSRNOP00000022861"/>
<dbReference type="PeptideAtlas" id="D3ZA12"/>
<dbReference type="GeneID" id="311607"/>
<dbReference type="KEGG" id="rno:311607"/>
<dbReference type="AGR" id="RGD:1310465"/>
<dbReference type="CTD" id="84181"/>
<dbReference type="RGD" id="1310465">
    <property type="gene designation" value="Chd6"/>
</dbReference>
<dbReference type="VEuPathDB" id="HostDB:ENSRNOG00000016744"/>
<dbReference type="eggNOG" id="KOG0384">
    <property type="taxonomic scope" value="Eukaryota"/>
</dbReference>
<dbReference type="HOGENOM" id="CLU_000315_5_1_1"/>
<dbReference type="InParanoid" id="D3ZA12"/>
<dbReference type="OrthoDB" id="5857104at2759"/>
<dbReference type="TreeFam" id="TF313572"/>
<dbReference type="PRO" id="PR:D3ZA12"/>
<dbReference type="Proteomes" id="UP000002494">
    <property type="component" value="Chromosome 3"/>
</dbReference>
<dbReference type="Proteomes" id="UP000234681">
    <property type="component" value="Chromosome 3"/>
</dbReference>
<dbReference type="Bgee" id="ENSRNOG00000016744">
    <property type="expression patterns" value="Expressed in thymus and 19 other cell types or tissues"/>
</dbReference>
<dbReference type="ExpressionAtlas" id="D3ZA12">
    <property type="expression patterns" value="baseline and differential"/>
</dbReference>
<dbReference type="GO" id="GO:0000785">
    <property type="term" value="C:chromatin"/>
    <property type="evidence" value="ECO:0000318"/>
    <property type="project" value="GO_Central"/>
</dbReference>
<dbReference type="GO" id="GO:0005654">
    <property type="term" value="C:nucleoplasm"/>
    <property type="evidence" value="ECO:0000250"/>
    <property type="project" value="UniProtKB"/>
</dbReference>
<dbReference type="GO" id="GO:0005634">
    <property type="term" value="C:nucleus"/>
    <property type="evidence" value="ECO:0000318"/>
    <property type="project" value="GO_Central"/>
</dbReference>
<dbReference type="GO" id="GO:0005524">
    <property type="term" value="F:ATP binding"/>
    <property type="evidence" value="ECO:0007669"/>
    <property type="project" value="UniProtKB-KW"/>
</dbReference>
<dbReference type="GO" id="GO:0016887">
    <property type="term" value="F:ATP hydrolysis activity"/>
    <property type="evidence" value="ECO:0000318"/>
    <property type="project" value="GO_Central"/>
</dbReference>
<dbReference type="GO" id="GO:0008094">
    <property type="term" value="F:ATP-dependent activity, acting on DNA"/>
    <property type="evidence" value="ECO:0000250"/>
    <property type="project" value="UniProtKB"/>
</dbReference>
<dbReference type="GO" id="GO:0140658">
    <property type="term" value="F:ATP-dependent chromatin remodeler activity"/>
    <property type="evidence" value="ECO:0000318"/>
    <property type="project" value="GO_Central"/>
</dbReference>
<dbReference type="GO" id="GO:0003682">
    <property type="term" value="F:chromatin binding"/>
    <property type="evidence" value="ECO:0000318"/>
    <property type="project" value="GO_Central"/>
</dbReference>
<dbReference type="GO" id="GO:0003677">
    <property type="term" value="F:DNA binding"/>
    <property type="evidence" value="ECO:0000318"/>
    <property type="project" value="GO_Central"/>
</dbReference>
<dbReference type="GO" id="GO:0004386">
    <property type="term" value="F:helicase activity"/>
    <property type="evidence" value="ECO:0007669"/>
    <property type="project" value="UniProtKB-KW"/>
</dbReference>
<dbReference type="GO" id="GO:0042393">
    <property type="term" value="F:histone binding"/>
    <property type="evidence" value="ECO:0000318"/>
    <property type="project" value="GO_Central"/>
</dbReference>
<dbReference type="GO" id="GO:0001221">
    <property type="term" value="F:transcription coregulator binding"/>
    <property type="evidence" value="ECO:0000266"/>
    <property type="project" value="RGD"/>
</dbReference>
<dbReference type="GO" id="GO:0045454">
    <property type="term" value="P:cell redox homeostasis"/>
    <property type="evidence" value="ECO:0000266"/>
    <property type="project" value="RGD"/>
</dbReference>
<dbReference type="GO" id="GO:0006338">
    <property type="term" value="P:chromatin remodeling"/>
    <property type="evidence" value="ECO:0000318"/>
    <property type="project" value="GO_Central"/>
</dbReference>
<dbReference type="GO" id="GO:0045944">
    <property type="term" value="P:positive regulation of transcription by RNA polymerase II"/>
    <property type="evidence" value="ECO:0000250"/>
    <property type="project" value="UniProtKB"/>
</dbReference>
<dbReference type="GO" id="GO:0010468">
    <property type="term" value="P:regulation of gene expression"/>
    <property type="evidence" value="ECO:0000318"/>
    <property type="project" value="GO_Central"/>
</dbReference>
<dbReference type="CDD" id="cd18668">
    <property type="entry name" value="CD1_tandem_CHD5-9_like"/>
    <property type="match status" value="1"/>
</dbReference>
<dbReference type="CDD" id="cd18663">
    <property type="entry name" value="CD2_tandem_CHD5-9_like"/>
    <property type="match status" value="1"/>
</dbReference>
<dbReference type="CDD" id="cd18793">
    <property type="entry name" value="SF2_C_SNF"/>
    <property type="match status" value="1"/>
</dbReference>
<dbReference type="FunFam" id="1.10.10.60:FF:000184">
    <property type="entry name" value="Chromodomain helicase DNA binding protein 6"/>
    <property type="match status" value="1"/>
</dbReference>
<dbReference type="FunFam" id="2.40.50.40:FF:000001">
    <property type="entry name" value="chromodomain-helicase-DNA-binding protein 8 isoform X4"/>
    <property type="match status" value="1"/>
</dbReference>
<dbReference type="FunFam" id="2.40.50.40:FF:000005">
    <property type="entry name" value="chromodomain-helicase-DNA-binding protein 8 isoform X4"/>
    <property type="match status" value="1"/>
</dbReference>
<dbReference type="FunFam" id="3.40.50.10810:FF:000003">
    <property type="entry name" value="chromodomain-helicase-DNA-binding protein 8 isoform X4"/>
    <property type="match status" value="1"/>
</dbReference>
<dbReference type="FunFam" id="3.40.50.300:FF:000015">
    <property type="entry name" value="chromodomain-helicase-DNA-binding protein 9 isoform X1"/>
    <property type="match status" value="1"/>
</dbReference>
<dbReference type="Gene3D" id="2.40.50.40">
    <property type="match status" value="2"/>
</dbReference>
<dbReference type="Gene3D" id="1.10.10.60">
    <property type="entry name" value="Homeodomain-like"/>
    <property type="match status" value="2"/>
</dbReference>
<dbReference type="Gene3D" id="3.40.50.300">
    <property type="entry name" value="P-loop containing nucleotide triphosphate hydrolases"/>
    <property type="match status" value="1"/>
</dbReference>
<dbReference type="Gene3D" id="3.40.50.10810">
    <property type="entry name" value="Tandem AAA-ATPase domain"/>
    <property type="match status" value="1"/>
</dbReference>
<dbReference type="InterPro" id="IPR006576">
    <property type="entry name" value="BRK_domain"/>
</dbReference>
<dbReference type="InterPro" id="IPR051493">
    <property type="entry name" value="CHD"/>
</dbReference>
<dbReference type="InterPro" id="IPR016197">
    <property type="entry name" value="Chromo-like_dom_sf"/>
</dbReference>
<dbReference type="InterPro" id="IPR000953">
    <property type="entry name" value="Chromo/chromo_shadow_dom"/>
</dbReference>
<dbReference type="InterPro" id="IPR023780">
    <property type="entry name" value="Chromo_domain"/>
</dbReference>
<dbReference type="InterPro" id="IPR002464">
    <property type="entry name" value="DNA/RNA_helicase_DEAH_CS"/>
</dbReference>
<dbReference type="InterPro" id="IPR014001">
    <property type="entry name" value="Helicase_ATP-bd"/>
</dbReference>
<dbReference type="InterPro" id="IPR001650">
    <property type="entry name" value="Helicase_C-like"/>
</dbReference>
<dbReference type="InterPro" id="IPR056342">
    <property type="entry name" value="HTH_CHD6-9"/>
</dbReference>
<dbReference type="InterPro" id="IPR027417">
    <property type="entry name" value="P-loop_NTPase"/>
</dbReference>
<dbReference type="InterPro" id="IPR038718">
    <property type="entry name" value="SNF2-like_sf"/>
</dbReference>
<dbReference type="InterPro" id="IPR049730">
    <property type="entry name" value="SNF2/RAD54-like_C"/>
</dbReference>
<dbReference type="InterPro" id="IPR000330">
    <property type="entry name" value="SNF2_N"/>
</dbReference>
<dbReference type="PANTHER" id="PTHR46850">
    <property type="entry name" value="CHROMODOMAIN-HELICASE-DNA-BINDING PROTEIN 9"/>
    <property type="match status" value="1"/>
</dbReference>
<dbReference type="PANTHER" id="PTHR46850:SF1">
    <property type="entry name" value="CHROMODOMAIN-HELICASE-DNA-BINDING PROTEIN 9"/>
    <property type="match status" value="1"/>
</dbReference>
<dbReference type="Pfam" id="PF00385">
    <property type="entry name" value="Chromo"/>
    <property type="match status" value="2"/>
</dbReference>
<dbReference type="Pfam" id="PF00271">
    <property type="entry name" value="Helicase_C"/>
    <property type="match status" value="1"/>
</dbReference>
<dbReference type="Pfam" id="PF23078">
    <property type="entry name" value="HTH_CHD6-9"/>
    <property type="match status" value="1"/>
</dbReference>
<dbReference type="Pfam" id="PF00176">
    <property type="entry name" value="SNF2-rel_dom"/>
    <property type="match status" value="1"/>
</dbReference>
<dbReference type="SMART" id="SM00592">
    <property type="entry name" value="BRK"/>
    <property type="match status" value="1"/>
</dbReference>
<dbReference type="SMART" id="SM00298">
    <property type="entry name" value="CHROMO"/>
    <property type="match status" value="2"/>
</dbReference>
<dbReference type="SMART" id="SM00487">
    <property type="entry name" value="DEXDc"/>
    <property type="match status" value="1"/>
</dbReference>
<dbReference type="SMART" id="SM00490">
    <property type="entry name" value="HELICc"/>
    <property type="match status" value="1"/>
</dbReference>
<dbReference type="SUPFAM" id="SSF54160">
    <property type="entry name" value="Chromo domain-like"/>
    <property type="match status" value="2"/>
</dbReference>
<dbReference type="SUPFAM" id="SSF52540">
    <property type="entry name" value="P-loop containing nucleoside triphosphate hydrolases"/>
    <property type="match status" value="2"/>
</dbReference>
<dbReference type="PROSITE" id="PS50013">
    <property type="entry name" value="CHROMO_2"/>
    <property type="match status" value="1"/>
</dbReference>
<dbReference type="PROSITE" id="PS00690">
    <property type="entry name" value="DEAH_ATP_HELICASE"/>
    <property type="match status" value="1"/>
</dbReference>
<dbReference type="PROSITE" id="PS51192">
    <property type="entry name" value="HELICASE_ATP_BIND_1"/>
    <property type="match status" value="1"/>
</dbReference>
<dbReference type="PROSITE" id="PS51194">
    <property type="entry name" value="HELICASE_CTER"/>
    <property type="match status" value="1"/>
</dbReference>
<gene>
    <name type="primary">Chd6</name>
</gene>
<protein>
    <recommendedName>
        <fullName>Chromodomain-helicase-DNA-binding protein 6</fullName>
        <shortName>CHD-6</shortName>
        <ecNumber evidence="3">3.6.4.-</ecNumber>
    </recommendedName>
    <alternativeName>
        <fullName>ATP-dependent helicase CHD6</fullName>
    </alternativeName>
</protein>
<proteinExistence type="evidence at protein level"/>
<name>CHD6_RAT</name>
<evidence type="ECO:0000250" key="1"/>
<evidence type="ECO:0000250" key="2">
    <source>
        <dbReference type="UniProtKB" id="A3KFM7"/>
    </source>
</evidence>
<evidence type="ECO:0000250" key="3">
    <source>
        <dbReference type="UniProtKB" id="Q8TD26"/>
    </source>
</evidence>
<evidence type="ECO:0000255" key="4">
    <source>
        <dbReference type="PROSITE-ProRule" id="PRU00053"/>
    </source>
</evidence>
<evidence type="ECO:0000255" key="5">
    <source>
        <dbReference type="PROSITE-ProRule" id="PRU00541"/>
    </source>
</evidence>
<evidence type="ECO:0000255" key="6">
    <source>
        <dbReference type="PROSITE-ProRule" id="PRU00542"/>
    </source>
</evidence>
<evidence type="ECO:0000256" key="7">
    <source>
        <dbReference type="SAM" id="MobiDB-lite"/>
    </source>
</evidence>
<evidence type="ECO:0000269" key="8">
    <source>
    </source>
</evidence>
<evidence type="ECO:0000305" key="9"/>
<evidence type="ECO:0007744" key="10">
    <source>
    </source>
</evidence>